<proteinExistence type="evidence at protein level"/>
<gene>
    <name evidence="3" type="primary">MES18</name>
    <name evidence="5" type="ordered locus">At5g58310</name>
    <name evidence="6" type="ORF">MCK7.18</name>
</gene>
<protein>
    <recommendedName>
        <fullName evidence="3">Methylesterase 18</fullName>
        <shortName evidence="3">AtMES18</shortName>
        <ecNumber evidence="2">3.1.1.-</ecNumber>
    </recommendedName>
</protein>
<evidence type="ECO:0000250" key="1">
    <source>
        <dbReference type="UniProtKB" id="Q6RYA0"/>
    </source>
</evidence>
<evidence type="ECO:0000269" key="2">
    <source>
    </source>
</evidence>
<evidence type="ECO:0000303" key="3">
    <source>
    </source>
</evidence>
<evidence type="ECO:0000305" key="4"/>
<evidence type="ECO:0000312" key="5">
    <source>
        <dbReference type="Araport" id="AT5G58310"/>
    </source>
</evidence>
<evidence type="ECO:0000312" key="6">
    <source>
        <dbReference type="EMBL" id="BAA96922.1"/>
    </source>
</evidence>
<organism>
    <name type="scientific">Arabidopsis thaliana</name>
    <name type="common">Mouse-ear cress</name>
    <dbReference type="NCBI Taxonomy" id="3702"/>
    <lineage>
        <taxon>Eukaryota</taxon>
        <taxon>Viridiplantae</taxon>
        <taxon>Streptophyta</taxon>
        <taxon>Embryophyta</taxon>
        <taxon>Tracheophyta</taxon>
        <taxon>Spermatophyta</taxon>
        <taxon>Magnoliopsida</taxon>
        <taxon>eudicotyledons</taxon>
        <taxon>Gunneridae</taxon>
        <taxon>Pentapetalae</taxon>
        <taxon>rosids</taxon>
        <taxon>malvids</taxon>
        <taxon>Brassicales</taxon>
        <taxon>Brassicaceae</taxon>
        <taxon>Camelineae</taxon>
        <taxon>Arabidopsis</taxon>
    </lineage>
</organism>
<keyword id="KW-0378">Hydrolase</keyword>
<keyword id="KW-1185">Reference proteome</keyword>
<accession>Q9LVL9</accession>
<comment type="function">
    <text evidence="2">Methylesterase shown to have methyl indole-3-acetic acid (MeIAA) esterase activity in vitro.</text>
</comment>
<comment type="catalytic activity">
    <reaction evidence="2">
        <text>methyl (indol-3-yl)acetate + H2O = (indol-3-yl)acetate + methanol + H(+)</text>
        <dbReference type="Rhea" id="RHEA:32919"/>
        <dbReference type="ChEBI" id="CHEBI:15377"/>
        <dbReference type="ChEBI" id="CHEBI:15378"/>
        <dbReference type="ChEBI" id="CHEBI:17790"/>
        <dbReference type="ChEBI" id="CHEBI:30854"/>
        <dbReference type="ChEBI" id="CHEBI:72782"/>
    </reaction>
    <physiologicalReaction direction="left-to-right" evidence="2">
        <dbReference type="Rhea" id="RHEA:32920"/>
    </physiologicalReaction>
</comment>
<comment type="pathway">
    <text evidence="2">Plant hormone biosynthesis.</text>
</comment>
<comment type="similarity">
    <text evidence="4">Belongs to the AB hydrolase superfamily. Methylesterase family.</text>
</comment>
<feature type="chain" id="PRO_0000418190" description="Methylesterase 18">
    <location>
        <begin position="1"/>
        <end position="263"/>
    </location>
</feature>
<feature type="active site" description="Acyl-ester intermediate" evidence="1">
    <location>
        <position position="80"/>
    </location>
</feature>
<feature type="active site" description="Charge relay system" evidence="1">
    <location>
        <position position="212"/>
    </location>
</feature>
<feature type="active site" description="Charge relay system" evidence="1">
    <location>
        <position position="240"/>
    </location>
</feature>
<sequence>MSEHHFVFVHGAGHGGWCWYKLANSLRDNGHKATCIDLKGAGINPTDPNTVSSLDDYDEPLYAFLSQLPNDQKVILVSHSVGGGSMTAAMCLFPSKVSLAVYVAAAMVKPGTLIPERLKNVMKICSGLIEEETEKIWDFTFGNGPQNLPTSIMMKPEYVRDKFYNESPMEDYTLATTLLRPAPVMAFIGIMDIPGAPETDKIPRVYVKTGKDHLFEPVLQEVMLALWPPAHTFLLPDSDHSAFFSQPQELYQFLLQAASSLSP</sequence>
<reference key="1">
    <citation type="journal article" date="2000" name="DNA Res.">
        <title>Structural analysis of Arabidopsis thaliana chromosome 5. X. Sequence features of the regions of 3,076,755 bp covered by sixty P1 and TAC clones.</title>
        <authorList>
            <person name="Sato S."/>
            <person name="Nakamura Y."/>
            <person name="Kaneko T."/>
            <person name="Katoh T."/>
            <person name="Asamizu E."/>
            <person name="Kotani H."/>
            <person name="Tabata S."/>
        </authorList>
    </citation>
    <scope>NUCLEOTIDE SEQUENCE [LARGE SCALE GENOMIC DNA]</scope>
    <source>
        <strain>cv. Columbia</strain>
    </source>
</reference>
<reference key="2">
    <citation type="journal article" date="2017" name="Plant J.">
        <title>Araport11: a complete reannotation of the Arabidopsis thaliana reference genome.</title>
        <authorList>
            <person name="Cheng C.Y."/>
            <person name="Krishnakumar V."/>
            <person name="Chan A.P."/>
            <person name="Thibaud-Nissen F."/>
            <person name="Schobel S."/>
            <person name="Town C.D."/>
        </authorList>
    </citation>
    <scope>GENOME REANNOTATION</scope>
    <source>
        <strain>cv. Columbia</strain>
    </source>
</reference>
<reference key="3">
    <citation type="journal article" date="2003" name="Science">
        <title>Empirical analysis of transcriptional activity in the Arabidopsis genome.</title>
        <authorList>
            <person name="Yamada K."/>
            <person name="Lim J."/>
            <person name="Dale J.M."/>
            <person name="Chen H."/>
            <person name="Shinn P."/>
            <person name="Palm C.J."/>
            <person name="Southwick A.M."/>
            <person name="Wu H.C."/>
            <person name="Kim C.J."/>
            <person name="Nguyen M."/>
            <person name="Pham P.K."/>
            <person name="Cheuk R.F."/>
            <person name="Karlin-Newmann G."/>
            <person name="Liu S.X."/>
            <person name="Lam B."/>
            <person name="Sakano H."/>
            <person name="Wu T."/>
            <person name="Yu G."/>
            <person name="Miranda M."/>
            <person name="Quach H.L."/>
            <person name="Tripp M."/>
            <person name="Chang C.H."/>
            <person name="Lee J.M."/>
            <person name="Toriumi M.J."/>
            <person name="Chan M.M."/>
            <person name="Tang C.C."/>
            <person name="Onodera C.S."/>
            <person name="Deng J.M."/>
            <person name="Akiyama K."/>
            <person name="Ansari Y."/>
            <person name="Arakawa T."/>
            <person name="Banh J."/>
            <person name="Banno F."/>
            <person name="Bowser L."/>
            <person name="Brooks S.Y."/>
            <person name="Carninci P."/>
            <person name="Chao Q."/>
            <person name="Choy N."/>
            <person name="Enju A."/>
            <person name="Goldsmith A.D."/>
            <person name="Gurjal M."/>
            <person name="Hansen N.F."/>
            <person name="Hayashizaki Y."/>
            <person name="Johnson-Hopson C."/>
            <person name="Hsuan V.W."/>
            <person name="Iida K."/>
            <person name="Karnes M."/>
            <person name="Khan S."/>
            <person name="Koesema E."/>
            <person name="Ishida J."/>
            <person name="Jiang P.X."/>
            <person name="Jones T."/>
            <person name="Kawai J."/>
            <person name="Kamiya A."/>
            <person name="Meyers C."/>
            <person name="Nakajima M."/>
            <person name="Narusaka M."/>
            <person name="Seki M."/>
            <person name="Sakurai T."/>
            <person name="Satou M."/>
            <person name="Tamse R."/>
            <person name="Vaysberg M."/>
            <person name="Wallender E.K."/>
            <person name="Wong C."/>
            <person name="Yamamura Y."/>
            <person name="Yuan S."/>
            <person name="Shinozaki K."/>
            <person name="Davis R.W."/>
            <person name="Theologis A."/>
            <person name="Ecker J.R."/>
        </authorList>
    </citation>
    <scope>NUCLEOTIDE SEQUENCE [LARGE SCALE MRNA]</scope>
    <source>
        <strain>cv. Columbia</strain>
    </source>
</reference>
<reference key="4">
    <citation type="submission" date="2002-03" db="EMBL/GenBank/DDBJ databases">
        <title>Full-length cDNA from Arabidopsis thaliana.</title>
        <authorList>
            <person name="Brover V.V."/>
            <person name="Troukhan M.E."/>
            <person name="Alexandrov N.A."/>
            <person name="Lu Y.-P."/>
            <person name="Flavell R.B."/>
            <person name="Feldmann K.A."/>
        </authorList>
    </citation>
    <scope>NUCLEOTIDE SEQUENCE [LARGE SCALE MRNA]</scope>
</reference>
<reference key="5">
    <citation type="journal article" date="2008" name="Plant Physiol.">
        <title>Inactive methyl indole-3-acetic acid ester can be hydrolyzed and activated by several esterases belonging to the AtMES esterase family of Arabidopsis.</title>
        <authorList>
            <person name="Yang Y."/>
            <person name="Xu R."/>
            <person name="Ma C.J."/>
            <person name="Vlot A.C."/>
            <person name="Klessig D.F."/>
            <person name="Pichersky E."/>
        </authorList>
    </citation>
    <scope>GENE FAMILY</scope>
    <scope>FUNCTION</scope>
    <scope>CATALYTIC ACTIVITY</scope>
    <scope>PATHWAY</scope>
</reference>
<dbReference type="EC" id="3.1.1.-" evidence="2"/>
<dbReference type="EMBL" id="AB019228">
    <property type="protein sequence ID" value="BAA96922.1"/>
    <property type="molecule type" value="Genomic_DNA"/>
</dbReference>
<dbReference type="EMBL" id="CP002688">
    <property type="protein sequence ID" value="AED97032.1"/>
    <property type="molecule type" value="Genomic_DNA"/>
</dbReference>
<dbReference type="EMBL" id="BT004145">
    <property type="protein sequence ID" value="AAO42166.1"/>
    <property type="molecule type" value="mRNA"/>
</dbReference>
<dbReference type="EMBL" id="BT005672">
    <property type="protein sequence ID" value="AAO64092.1"/>
    <property type="molecule type" value="mRNA"/>
</dbReference>
<dbReference type="EMBL" id="AY084976">
    <property type="protein sequence ID" value="AAM61536.1"/>
    <property type="molecule type" value="mRNA"/>
</dbReference>
<dbReference type="RefSeq" id="NP_200639.1">
    <property type="nucleotide sequence ID" value="NM_125216.3"/>
</dbReference>
<dbReference type="SMR" id="Q9LVL9"/>
<dbReference type="BioGRID" id="21187">
    <property type="interactions" value="2"/>
</dbReference>
<dbReference type="FunCoup" id="Q9LVL9">
    <property type="interactions" value="3"/>
</dbReference>
<dbReference type="IntAct" id="Q9LVL9">
    <property type="interactions" value="1"/>
</dbReference>
<dbReference type="STRING" id="3702.Q9LVL9"/>
<dbReference type="ESTHER" id="arath-MES18">
    <property type="family name" value="Hydroxynitrile_lyase"/>
</dbReference>
<dbReference type="PaxDb" id="3702-AT5G58310.1"/>
<dbReference type="ProteomicsDB" id="250646"/>
<dbReference type="EnsemblPlants" id="AT5G58310.1">
    <property type="protein sequence ID" value="AT5G58310.1"/>
    <property type="gene ID" value="AT5G58310"/>
</dbReference>
<dbReference type="GeneID" id="835943"/>
<dbReference type="Gramene" id="AT5G58310.1">
    <property type="protein sequence ID" value="AT5G58310.1"/>
    <property type="gene ID" value="AT5G58310"/>
</dbReference>
<dbReference type="KEGG" id="ath:AT5G58310"/>
<dbReference type="Araport" id="AT5G58310"/>
<dbReference type="TAIR" id="AT5G58310">
    <property type="gene designation" value="MES18"/>
</dbReference>
<dbReference type="eggNOG" id="ENOG502RZ4X">
    <property type="taxonomic scope" value="Eukaryota"/>
</dbReference>
<dbReference type="HOGENOM" id="CLU_046066_0_1_1"/>
<dbReference type="InParanoid" id="Q9LVL9"/>
<dbReference type="OMA" id="CWYKLAN"/>
<dbReference type="OrthoDB" id="1263307at2759"/>
<dbReference type="PhylomeDB" id="Q9LVL9"/>
<dbReference type="BioCyc" id="ARA:AT5G58310-MONOMER"/>
<dbReference type="PRO" id="PR:Q9LVL9"/>
<dbReference type="Proteomes" id="UP000006548">
    <property type="component" value="Chromosome 5"/>
</dbReference>
<dbReference type="ExpressionAtlas" id="Q9LVL9">
    <property type="expression patterns" value="baseline and differential"/>
</dbReference>
<dbReference type="GO" id="GO:0016788">
    <property type="term" value="F:hydrolase activity, acting on ester bonds"/>
    <property type="evidence" value="ECO:0000314"/>
    <property type="project" value="TAIR"/>
</dbReference>
<dbReference type="GO" id="GO:0080030">
    <property type="term" value="F:methyl indole-3-acetate esterase activity"/>
    <property type="evidence" value="ECO:0000314"/>
    <property type="project" value="TAIR"/>
</dbReference>
<dbReference type="FunFam" id="3.40.50.1820:FF:000025">
    <property type="entry name" value="putative methylesterase 11, chloroplastic"/>
    <property type="match status" value="1"/>
</dbReference>
<dbReference type="Gene3D" id="3.40.50.1820">
    <property type="entry name" value="alpha/beta hydrolase"/>
    <property type="match status" value="1"/>
</dbReference>
<dbReference type="InterPro" id="IPR000073">
    <property type="entry name" value="AB_hydrolase_1"/>
</dbReference>
<dbReference type="InterPro" id="IPR029058">
    <property type="entry name" value="AB_hydrolase_fold"/>
</dbReference>
<dbReference type="InterPro" id="IPR045889">
    <property type="entry name" value="MES/HNL"/>
</dbReference>
<dbReference type="PANTHER" id="PTHR10992:SF1029">
    <property type="entry name" value="METHYLESTERASE 18"/>
    <property type="match status" value="1"/>
</dbReference>
<dbReference type="PANTHER" id="PTHR10992">
    <property type="entry name" value="METHYLESTERASE FAMILY MEMBER"/>
    <property type="match status" value="1"/>
</dbReference>
<dbReference type="Pfam" id="PF12697">
    <property type="entry name" value="Abhydrolase_6"/>
    <property type="match status" value="1"/>
</dbReference>
<dbReference type="SUPFAM" id="SSF53474">
    <property type="entry name" value="alpha/beta-Hydrolases"/>
    <property type="match status" value="1"/>
</dbReference>
<name>MES18_ARATH</name>